<dbReference type="EMBL" id="CM000129">
    <property type="protein sequence ID" value="EAY94848.1"/>
    <property type="molecule type" value="Genomic_DNA"/>
</dbReference>
<dbReference type="SMR" id="A2XVI8"/>
<dbReference type="STRING" id="39946.A2XVI8"/>
<dbReference type="EnsemblPlants" id="BGIOSGA014714-TA">
    <property type="protein sequence ID" value="BGIOSGA014714-PA"/>
    <property type="gene ID" value="BGIOSGA014714"/>
</dbReference>
<dbReference type="EnsemblPlants" id="OsGoSa_04g0019590.01">
    <property type="protein sequence ID" value="OsGoSa_04g0019590.01"/>
    <property type="gene ID" value="OsGoSa_04g0019590"/>
</dbReference>
<dbReference type="EnsemblPlants" id="OsGoSa_04g0019590.02">
    <property type="protein sequence ID" value="OsGoSa_04g0019590.02"/>
    <property type="gene ID" value="OsGoSa_04g0019590"/>
</dbReference>
<dbReference type="EnsemblPlants" id="OsIR64_04g0019130.01">
    <property type="protein sequence ID" value="OsIR64_04g0019130.01"/>
    <property type="gene ID" value="OsIR64_04g0019130"/>
</dbReference>
<dbReference type="EnsemblPlants" id="OsIR64_04g0019130.02">
    <property type="protein sequence ID" value="OsIR64_04g0019130.02"/>
    <property type="gene ID" value="OsIR64_04g0019130"/>
</dbReference>
<dbReference type="EnsemblPlants" id="OsKYG_04g0019470.01">
    <property type="protein sequence ID" value="OsKYG_04g0019470.01"/>
    <property type="gene ID" value="OsKYG_04g0019470"/>
</dbReference>
<dbReference type="EnsemblPlants" id="OsKYG_04g0019470.02">
    <property type="protein sequence ID" value="OsKYG_04g0019470.02"/>
    <property type="gene ID" value="OsKYG_04g0019470"/>
</dbReference>
<dbReference type="EnsemblPlants" id="OsLaMu_04g0020130.01">
    <property type="protein sequence ID" value="OsLaMu_04g0020130.01"/>
    <property type="gene ID" value="OsLaMu_04g0020130"/>
</dbReference>
<dbReference type="EnsemblPlants" id="OsLaMu_04g0020130.02">
    <property type="protein sequence ID" value="OsLaMu_04g0020130.02"/>
    <property type="gene ID" value="OsLaMu_04g0020130"/>
</dbReference>
<dbReference type="EnsemblPlants" id="OsLima_04g0019620.01">
    <property type="protein sequence ID" value="OsLima_04g0019620.01"/>
    <property type="gene ID" value="OsLima_04g0019620"/>
</dbReference>
<dbReference type="EnsemblPlants" id="OsLima_04g0019620.02">
    <property type="protein sequence ID" value="OsLima_04g0019620.02"/>
    <property type="gene ID" value="OsLima_04g0019620"/>
</dbReference>
<dbReference type="EnsemblPlants" id="OsLiXu_04g0019960.01">
    <property type="protein sequence ID" value="OsLiXu_04g0019960.01"/>
    <property type="gene ID" value="OsLiXu_04g0019960"/>
</dbReference>
<dbReference type="EnsemblPlants" id="OsLiXu_04g0019960.02">
    <property type="protein sequence ID" value="OsLiXu_04g0019960.02"/>
    <property type="gene ID" value="OsLiXu_04g0019960"/>
</dbReference>
<dbReference type="EnsemblPlants" id="OsMH63_04G020480_01">
    <property type="protein sequence ID" value="OsMH63_04G020480_01"/>
    <property type="gene ID" value="OsMH63_04G020480"/>
</dbReference>
<dbReference type="EnsemblPlants" id="OsMH63_04G020480_02">
    <property type="protein sequence ID" value="OsMH63_04G020480_02"/>
    <property type="gene ID" value="OsMH63_04G020480"/>
</dbReference>
<dbReference type="EnsemblPlants" id="OsPr106_04g0020340.01">
    <property type="protein sequence ID" value="OsPr106_04g0020340.01"/>
    <property type="gene ID" value="OsPr106_04g0020340"/>
</dbReference>
<dbReference type="EnsemblPlants" id="OsPr106_04g0020340.02">
    <property type="protein sequence ID" value="OsPr106_04g0020340.02"/>
    <property type="gene ID" value="OsPr106_04g0020340"/>
</dbReference>
<dbReference type="EnsemblPlants" id="OsZS97_04G020460_01">
    <property type="protein sequence ID" value="OsZS97_04G020460_01"/>
    <property type="gene ID" value="OsZS97_04G020460"/>
</dbReference>
<dbReference type="EnsemblPlants" id="OsZS97_04G020460_02">
    <property type="protein sequence ID" value="OsZS97_04G020460_02"/>
    <property type="gene ID" value="OsZS97_04G020460"/>
</dbReference>
<dbReference type="Gramene" id="BGIOSGA014714-TA">
    <property type="protein sequence ID" value="BGIOSGA014714-PA"/>
    <property type="gene ID" value="BGIOSGA014714"/>
</dbReference>
<dbReference type="Gramene" id="OsGoSa_04g0019590.01">
    <property type="protein sequence ID" value="OsGoSa_04g0019590.01"/>
    <property type="gene ID" value="OsGoSa_04g0019590"/>
</dbReference>
<dbReference type="Gramene" id="OsGoSa_04g0019590.02">
    <property type="protein sequence ID" value="OsGoSa_04g0019590.02"/>
    <property type="gene ID" value="OsGoSa_04g0019590"/>
</dbReference>
<dbReference type="Gramene" id="OsIR64_04g0019130.01">
    <property type="protein sequence ID" value="OsIR64_04g0019130.01"/>
    <property type="gene ID" value="OsIR64_04g0019130"/>
</dbReference>
<dbReference type="Gramene" id="OsIR64_04g0019130.02">
    <property type="protein sequence ID" value="OsIR64_04g0019130.02"/>
    <property type="gene ID" value="OsIR64_04g0019130"/>
</dbReference>
<dbReference type="Gramene" id="OsKYG_04g0019470.01">
    <property type="protein sequence ID" value="OsKYG_04g0019470.01"/>
    <property type="gene ID" value="OsKYG_04g0019470"/>
</dbReference>
<dbReference type="Gramene" id="OsKYG_04g0019470.02">
    <property type="protein sequence ID" value="OsKYG_04g0019470.02"/>
    <property type="gene ID" value="OsKYG_04g0019470"/>
</dbReference>
<dbReference type="Gramene" id="OsLaMu_04g0020130.01">
    <property type="protein sequence ID" value="OsLaMu_04g0020130.01"/>
    <property type="gene ID" value="OsLaMu_04g0020130"/>
</dbReference>
<dbReference type="Gramene" id="OsLaMu_04g0020130.02">
    <property type="protein sequence ID" value="OsLaMu_04g0020130.02"/>
    <property type="gene ID" value="OsLaMu_04g0020130"/>
</dbReference>
<dbReference type="Gramene" id="OsLima_04g0019620.01">
    <property type="protein sequence ID" value="OsLima_04g0019620.01"/>
    <property type="gene ID" value="OsLima_04g0019620"/>
</dbReference>
<dbReference type="Gramene" id="OsLima_04g0019620.02">
    <property type="protein sequence ID" value="OsLima_04g0019620.02"/>
    <property type="gene ID" value="OsLima_04g0019620"/>
</dbReference>
<dbReference type="Gramene" id="OsLiXu_04g0019960.01">
    <property type="protein sequence ID" value="OsLiXu_04g0019960.01"/>
    <property type="gene ID" value="OsLiXu_04g0019960"/>
</dbReference>
<dbReference type="Gramene" id="OsLiXu_04g0019960.02">
    <property type="protein sequence ID" value="OsLiXu_04g0019960.02"/>
    <property type="gene ID" value="OsLiXu_04g0019960"/>
</dbReference>
<dbReference type="Gramene" id="OsMH63_04G020480_01">
    <property type="protein sequence ID" value="OsMH63_04G020480_01"/>
    <property type="gene ID" value="OsMH63_04G020480"/>
</dbReference>
<dbReference type="Gramene" id="OsMH63_04G020480_02">
    <property type="protein sequence ID" value="OsMH63_04G020480_02"/>
    <property type="gene ID" value="OsMH63_04G020480"/>
</dbReference>
<dbReference type="Gramene" id="OsPr106_04g0020340.01">
    <property type="protein sequence ID" value="OsPr106_04g0020340.01"/>
    <property type="gene ID" value="OsPr106_04g0020340"/>
</dbReference>
<dbReference type="Gramene" id="OsPr106_04g0020340.02">
    <property type="protein sequence ID" value="OsPr106_04g0020340.02"/>
    <property type="gene ID" value="OsPr106_04g0020340"/>
</dbReference>
<dbReference type="Gramene" id="OsZS97_04G020460_01">
    <property type="protein sequence ID" value="OsZS97_04G020460_01"/>
    <property type="gene ID" value="OsZS97_04G020460"/>
</dbReference>
<dbReference type="Gramene" id="OsZS97_04G020460_02">
    <property type="protein sequence ID" value="OsZS97_04G020460_02"/>
    <property type="gene ID" value="OsZS97_04G020460"/>
</dbReference>
<dbReference type="HOGENOM" id="CLU_071168_0_2_1"/>
<dbReference type="OMA" id="PWIPAET"/>
<dbReference type="OrthoDB" id="1906822at2759"/>
<dbReference type="Proteomes" id="UP000007015">
    <property type="component" value="Chromosome 4"/>
</dbReference>
<dbReference type="GO" id="GO:0005634">
    <property type="term" value="C:nucleus"/>
    <property type="evidence" value="ECO:0000250"/>
    <property type="project" value="UniProtKB"/>
</dbReference>
<dbReference type="GO" id="GO:0003677">
    <property type="term" value="F:DNA binding"/>
    <property type="evidence" value="ECO:0007669"/>
    <property type="project" value="UniProtKB-KW"/>
</dbReference>
<dbReference type="GO" id="GO:0009299">
    <property type="term" value="P:mRNA transcription"/>
    <property type="evidence" value="ECO:0000250"/>
    <property type="project" value="UniProtKB"/>
</dbReference>
<dbReference type="GO" id="GO:0090698">
    <property type="term" value="P:post-embryonic plant morphogenesis"/>
    <property type="evidence" value="ECO:0000250"/>
    <property type="project" value="UniProtKB"/>
</dbReference>
<dbReference type="GO" id="GO:0009416">
    <property type="term" value="P:response to light stimulus"/>
    <property type="evidence" value="ECO:0007669"/>
    <property type="project" value="TreeGrafter"/>
</dbReference>
<dbReference type="InterPro" id="IPR040222">
    <property type="entry name" value="ALOG"/>
</dbReference>
<dbReference type="InterPro" id="IPR006936">
    <property type="entry name" value="ALOG_dom"/>
</dbReference>
<dbReference type="PANTHER" id="PTHR31165">
    <property type="entry name" value="PROTEIN G1-LIKE2"/>
    <property type="match status" value="1"/>
</dbReference>
<dbReference type="PANTHER" id="PTHR31165:SF43">
    <property type="entry name" value="PROTEIN G1-LIKE3"/>
    <property type="match status" value="1"/>
</dbReference>
<dbReference type="Pfam" id="PF04852">
    <property type="entry name" value="ALOG_dom"/>
    <property type="match status" value="1"/>
</dbReference>
<dbReference type="PROSITE" id="PS51697">
    <property type="entry name" value="ALOG"/>
    <property type="match status" value="1"/>
</dbReference>
<reference key="1">
    <citation type="journal article" date="2005" name="PLoS Biol.">
        <title>The genomes of Oryza sativa: a history of duplications.</title>
        <authorList>
            <person name="Yu J."/>
            <person name="Wang J."/>
            <person name="Lin W."/>
            <person name="Li S."/>
            <person name="Li H."/>
            <person name="Zhou J."/>
            <person name="Ni P."/>
            <person name="Dong W."/>
            <person name="Hu S."/>
            <person name="Zeng C."/>
            <person name="Zhang J."/>
            <person name="Zhang Y."/>
            <person name="Li R."/>
            <person name="Xu Z."/>
            <person name="Li S."/>
            <person name="Li X."/>
            <person name="Zheng H."/>
            <person name="Cong L."/>
            <person name="Lin L."/>
            <person name="Yin J."/>
            <person name="Geng J."/>
            <person name="Li G."/>
            <person name="Shi J."/>
            <person name="Liu J."/>
            <person name="Lv H."/>
            <person name="Li J."/>
            <person name="Wang J."/>
            <person name="Deng Y."/>
            <person name="Ran L."/>
            <person name="Shi X."/>
            <person name="Wang X."/>
            <person name="Wu Q."/>
            <person name="Li C."/>
            <person name="Ren X."/>
            <person name="Wang J."/>
            <person name="Wang X."/>
            <person name="Li D."/>
            <person name="Liu D."/>
            <person name="Zhang X."/>
            <person name="Ji Z."/>
            <person name="Zhao W."/>
            <person name="Sun Y."/>
            <person name="Zhang Z."/>
            <person name="Bao J."/>
            <person name="Han Y."/>
            <person name="Dong L."/>
            <person name="Ji J."/>
            <person name="Chen P."/>
            <person name="Wu S."/>
            <person name="Liu J."/>
            <person name="Xiao Y."/>
            <person name="Bu D."/>
            <person name="Tan J."/>
            <person name="Yang L."/>
            <person name="Ye C."/>
            <person name="Zhang J."/>
            <person name="Xu J."/>
            <person name="Zhou Y."/>
            <person name="Yu Y."/>
            <person name="Zhang B."/>
            <person name="Zhuang S."/>
            <person name="Wei H."/>
            <person name="Liu B."/>
            <person name="Lei M."/>
            <person name="Yu H."/>
            <person name="Li Y."/>
            <person name="Xu H."/>
            <person name="Wei S."/>
            <person name="He X."/>
            <person name="Fang L."/>
            <person name="Zhang Z."/>
            <person name="Zhang Y."/>
            <person name="Huang X."/>
            <person name="Su Z."/>
            <person name="Tong W."/>
            <person name="Li J."/>
            <person name="Tong Z."/>
            <person name="Li S."/>
            <person name="Ye J."/>
            <person name="Wang L."/>
            <person name="Fang L."/>
            <person name="Lei T."/>
            <person name="Chen C.-S."/>
            <person name="Chen H.-C."/>
            <person name="Xu Z."/>
            <person name="Li H."/>
            <person name="Huang H."/>
            <person name="Zhang F."/>
            <person name="Xu H."/>
            <person name="Li N."/>
            <person name="Zhao C."/>
            <person name="Li S."/>
            <person name="Dong L."/>
            <person name="Huang Y."/>
            <person name="Li L."/>
            <person name="Xi Y."/>
            <person name="Qi Q."/>
            <person name="Li W."/>
            <person name="Zhang B."/>
            <person name="Hu W."/>
            <person name="Zhang Y."/>
            <person name="Tian X."/>
            <person name="Jiao Y."/>
            <person name="Liang X."/>
            <person name="Jin J."/>
            <person name="Gao L."/>
            <person name="Zheng W."/>
            <person name="Hao B."/>
            <person name="Liu S.-M."/>
            <person name="Wang W."/>
            <person name="Yuan L."/>
            <person name="Cao M."/>
            <person name="McDermott J."/>
            <person name="Samudrala R."/>
            <person name="Wang J."/>
            <person name="Wong G.K.-S."/>
            <person name="Yang H."/>
        </authorList>
    </citation>
    <scope>NUCLEOTIDE SEQUENCE [LARGE SCALE GENOMIC DNA]</scope>
    <source>
        <strain>cv. 93-11</strain>
    </source>
</reference>
<sequence length="202" mass="21673">MDLSPNPDSPPSGGGNGGGGGSSSSNSSPSMGAGAPQSPSRYEAQKRRDWNTFGQYLRNHRPPLSLAQCSGAHVLEFLRYLDQFGKTKVHTAACPFFGHPSPPAPCPCPLRQAWGSLDALVGRLRAAFEENGGRPESNPFAARAVRLYLREVREHQARARGVSYEKKKRKKPQQQQLQGGDSSGLHGHQHHPPPPPPAGAAC</sequence>
<keyword id="KW-0217">Developmental protein</keyword>
<keyword id="KW-0238">DNA-binding</keyword>
<keyword id="KW-0539">Nucleus</keyword>
<keyword id="KW-1185">Reference proteome</keyword>
<keyword id="KW-0804">Transcription</keyword>
<keyword id="KW-0805">Transcription regulation</keyword>
<organism>
    <name type="scientific">Oryza sativa subsp. indica</name>
    <name type="common">Rice</name>
    <dbReference type="NCBI Taxonomy" id="39946"/>
    <lineage>
        <taxon>Eukaryota</taxon>
        <taxon>Viridiplantae</taxon>
        <taxon>Streptophyta</taxon>
        <taxon>Embryophyta</taxon>
        <taxon>Tracheophyta</taxon>
        <taxon>Spermatophyta</taxon>
        <taxon>Magnoliopsida</taxon>
        <taxon>Liliopsida</taxon>
        <taxon>Poales</taxon>
        <taxon>Poaceae</taxon>
        <taxon>BOP clade</taxon>
        <taxon>Oryzoideae</taxon>
        <taxon>Oryzeae</taxon>
        <taxon>Oryzinae</taxon>
        <taxon>Oryza</taxon>
        <taxon>Oryza sativa</taxon>
    </lineage>
</organism>
<feature type="chain" id="PRO_0000425306" description="Protein G1-like4">
    <location>
        <begin position="1"/>
        <end position="202"/>
    </location>
</feature>
<feature type="domain" description="ALOG" evidence="2">
    <location>
        <begin position="41"/>
        <end position="168"/>
    </location>
</feature>
<feature type="region of interest" description="Disordered" evidence="3">
    <location>
        <begin position="1"/>
        <end position="44"/>
    </location>
</feature>
<feature type="region of interest" description="Disordered" evidence="3">
    <location>
        <begin position="158"/>
        <end position="202"/>
    </location>
</feature>
<feature type="short sequence motif" description="Nuclear localization signal" evidence="1">
    <location>
        <begin position="166"/>
        <end position="170"/>
    </location>
</feature>
<feature type="compositionally biased region" description="Gly residues" evidence="3">
    <location>
        <begin position="12"/>
        <end position="22"/>
    </location>
</feature>
<feature type="compositionally biased region" description="Low complexity" evidence="3">
    <location>
        <begin position="23"/>
        <end position="36"/>
    </location>
</feature>
<feature type="compositionally biased region" description="Low complexity" evidence="3">
    <location>
        <begin position="173"/>
        <end position="186"/>
    </location>
</feature>
<feature type="compositionally biased region" description="Pro residues" evidence="3">
    <location>
        <begin position="192"/>
        <end position="202"/>
    </location>
</feature>
<proteinExistence type="inferred from homology"/>
<comment type="function">
    <text evidence="1">Probable transcription regulator that acts as a developmental regulator by promoting cell growth in response to light.</text>
</comment>
<comment type="subcellular location">
    <subcellularLocation>
        <location evidence="1">Nucleus</location>
    </subcellularLocation>
</comment>
<comment type="similarity">
    <text evidence="4">Belongs to the plant homeotic and developmental regulators ALOG protein family.</text>
</comment>
<evidence type="ECO:0000250" key="1"/>
<evidence type="ECO:0000255" key="2">
    <source>
        <dbReference type="PROSITE-ProRule" id="PRU01033"/>
    </source>
</evidence>
<evidence type="ECO:0000256" key="3">
    <source>
        <dbReference type="SAM" id="MobiDB-lite"/>
    </source>
</evidence>
<evidence type="ECO:0000305" key="4"/>
<gene>
    <name type="ORF">OsI_16643</name>
</gene>
<protein>
    <recommendedName>
        <fullName>Protein G1-like4</fullName>
    </recommendedName>
</protein>
<accession>A2XVI8</accession>
<name>G1L4_ORYSI</name>